<gene>
    <name evidence="1" type="primary">ispF</name>
    <name type="ordered locus">CTC_00232</name>
</gene>
<dbReference type="EC" id="4.6.1.12" evidence="1"/>
<dbReference type="EMBL" id="AE015927">
    <property type="protein sequence ID" value="AAO34880.1"/>
    <property type="molecule type" value="Genomic_DNA"/>
</dbReference>
<dbReference type="RefSeq" id="WP_011098547.1">
    <property type="nucleotide sequence ID" value="NC_004557.1"/>
</dbReference>
<dbReference type="SMR" id="Q899E9"/>
<dbReference type="STRING" id="212717.CTC_00232"/>
<dbReference type="GeneID" id="24254762"/>
<dbReference type="KEGG" id="ctc:CTC_00232"/>
<dbReference type="HOGENOM" id="CLU_084630_2_0_9"/>
<dbReference type="OrthoDB" id="9804336at2"/>
<dbReference type="UniPathway" id="UPA00056">
    <property type="reaction ID" value="UER00095"/>
</dbReference>
<dbReference type="Proteomes" id="UP000001412">
    <property type="component" value="Chromosome"/>
</dbReference>
<dbReference type="GO" id="GO:0008685">
    <property type="term" value="F:2-C-methyl-D-erythritol 2,4-cyclodiphosphate synthase activity"/>
    <property type="evidence" value="ECO:0007669"/>
    <property type="project" value="UniProtKB-UniRule"/>
</dbReference>
<dbReference type="GO" id="GO:0046872">
    <property type="term" value="F:metal ion binding"/>
    <property type="evidence" value="ECO:0007669"/>
    <property type="project" value="UniProtKB-KW"/>
</dbReference>
<dbReference type="GO" id="GO:0019288">
    <property type="term" value="P:isopentenyl diphosphate biosynthetic process, methylerythritol 4-phosphate pathway"/>
    <property type="evidence" value="ECO:0007669"/>
    <property type="project" value="UniProtKB-UniRule"/>
</dbReference>
<dbReference type="GO" id="GO:0016114">
    <property type="term" value="P:terpenoid biosynthetic process"/>
    <property type="evidence" value="ECO:0007669"/>
    <property type="project" value="InterPro"/>
</dbReference>
<dbReference type="CDD" id="cd00554">
    <property type="entry name" value="MECDP_synthase"/>
    <property type="match status" value="1"/>
</dbReference>
<dbReference type="FunFam" id="3.30.1330.50:FF:000001">
    <property type="entry name" value="2-C-methyl-D-erythritol 2,4-cyclodiphosphate synthase"/>
    <property type="match status" value="1"/>
</dbReference>
<dbReference type="Gene3D" id="3.30.1330.50">
    <property type="entry name" value="2-C-methyl-D-erythritol 2,4-cyclodiphosphate synthase"/>
    <property type="match status" value="1"/>
</dbReference>
<dbReference type="HAMAP" id="MF_00107">
    <property type="entry name" value="IspF"/>
    <property type="match status" value="1"/>
</dbReference>
<dbReference type="InterPro" id="IPR003526">
    <property type="entry name" value="MECDP_synthase"/>
</dbReference>
<dbReference type="InterPro" id="IPR020555">
    <property type="entry name" value="MECDP_synthase_CS"/>
</dbReference>
<dbReference type="InterPro" id="IPR036571">
    <property type="entry name" value="MECDP_synthase_sf"/>
</dbReference>
<dbReference type="NCBIfam" id="TIGR00151">
    <property type="entry name" value="ispF"/>
    <property type="match status" value="1"/>
</dbReference>
<dbReference type="PANTHER" id="PTHR43181">
    <property type="entry name" value="2-C-METHYL-D-ERYTHRITOL 2,4-CYCLODIPHOSPHATE SYNTHASE, CHLOROPLASTIC"/>
    <property type="match status" value="1"/>
</dbReference>
<dbReference type="PANTHER" id="PTHR43181:SF1">
    <property type="entry name" value="2-C-METHYL-D-ERYTHRITOL 2,4-CYCLODIPHOSPHATE SYNTHASE, CHLOROPLASTIC"/>
    <property type="match status" value="1"/>
</dbReference>
<dbReference type="Pfam" id="PF02542">
    <property type="entry name" value="YgbB"/>
    <property type="match status" value="1"/>
</dbReference>
<dbReference type="SUPFAM" id="SSF69765">
    <property type="entry name" value="IpsF-like"/>
    <property type="match status" value="1"/>
</dbReference>
<dbReference type="PROSITE" id="PS01350">
    <property type="entry name" value="ISPF"/>
    <property type="match status" value="1"/>
</dbReference>
<name>ISPF_CLOTE</name>
<keyword id="KW-0414">Isoprene biosynthesis</keyword>
<keyword id="KW-0456">Lyase</keyword>
<keyword id="KW-0479">Metal-binding</keyword>
<keyword id="KW-1185">Reference proteome</keyword>
<organism>
    <name type="scientific">Clostridium tetani (strain Massachusetts / E88)</name>
    <dbReference type="NCBI Taxonomy" id="212717"/>
    <lineage>
        <taxon>Bacteria</taxon>
        <taxon>Bacillati</taxon>
        <taxon>Bacillota</taxon>
        <taxon>Clostridia</taxon>
        <taxon>Eubacteriales</taxon>
        <taxon>Clostridiaceae</taxon>
        <taxon>Clostridium</taxon>
    </lineage>
</organism>
<reference key="1">
    <citation type="journal article" date="2003" name="Proc. Natl. Acad. Sci. U.S.A.">
        <title>The genome sequence of Clostridium tetani, the causative agent of tetanus disease.</title>
        <authorList>
            <person name="Brueggemann H."/>
            <person name="Baeumer S."/>
            <person name="Fricke W.F."/>
            <person name="Wiezer A."/>
            <person name="Liesegang H."/>
            <person name="Decker I."/>
            <person name="Herzberg C."/>
            <person name="Martinez-Arias R."/>
            <person name="Merkl R."/>
            <person name="Henne A."/>
            <person name="Gottschalk G."/>
        </authorList>
    </citation>
    <scope>NUCLEOTIDE SEQUENCE [LARGE SCALE GENOMIC DNA]</scope>
    <source>
        <strain>Massachusetts / E88</strain>
    </source>
</reference>
<feature type="chain" id="PRO_0000189459" description="2-C-methyl-D-erythritol 2,4-cyclodiphosphate synthase">
    <location>
        <begin position="1"/>
        <end position="158"/>
    </location>
</feature>
<feature type="binding site" evidence="1">
    <location>
        <begin position="8"/>
        <end position="10"/>
    </location>
    <ligand>
        <name>4-CDP-2-C-methyl-D-erythritol 2-phosphate</name>
        <dbReference type="ChEBI" id="CHEBI:57919"/>
    </ligand>
</feature>
<feature type="binding site" evidence="1">
    <location>
        <position position="8"/>
    </location>
    <ligand>
        <name>a divalent metal cation</name>
        <dbReference type="ChEBI" id="CHEBI:60240"/>
    </ligand>
</feature>
<feature type="binding site" evidence="1">
    <location>
        <position position="10"/>
    </location>
    <ligand>
        <name>a divalent metal cation</name>
        <dbReference type="ChEBI" id="CHEBI:60240"/>
    </ligand>
</feature>
<feature type="binding site" evidence="1">
    <location>
        <begin position="34"/>
        <end position="35"/>
    </location>
    <ligand>
        <name>4-CDP-2-C-methyl-D-erythritol 2-phosphate</name>
        <dbReference type="ChEBI" id="CHEBI:57919"/>
    </ligand>
</feature>
<feature type="binding site" evidence="1">
    <location>
        <position position="42"/>
    </location>
    <ligand>
        <name>a divalent metal cation</name>
        <dbReference type="ChEBI" id="CHEBI:60240"/>
    </ligand>
</feature>
<feature type="binding site" evidence="1">
    <location>
        <begin position="56"/>
        <end position="58"/>
    </location>
    <ligand>
        <name>4-CDP-2-C-methyl-D-erythritol 2-phosphate</name>
        <dbReference type="ChEBI" id="CHEBI:57919"/>
    </ligand>
</feature>
<feature type="binding site" evidence="1">
    <location>
        <begin position="61"/>
        <end position="65"/>
    </location>
    <ligand>
        <name>4-CDP-2-C-methyl-D-erythritol 2-phosphate</name>
        <dbReference type="ChEBI" id="CHEBI:57919"/>
    </ligand>
</feature>
<feature type="binding site" evidence="1">
    <location>
        <begin position="100"/>
        <end position="106"/>
    </location>
    <ligand>
        <name>4-CDP-2-C-methyl-D-erythritol 2-phosphate</name>
        <dbReference type="ChEBI" id="CHEBI:57919"/>
    </ligand>
</feature>
<feature type="binding site" evidence="1">
    <location>
        <begin position="132"/>
        <end position="135"/>
    </location>
    <ligand>
        <name>4-CDP-2-C-methyl-D-erythritol 2-phosphate</name>
        <dbReference type="ChEBI" id="CHEBI:57919"/>
    </ligand>
</feature>
<feature type="binding site" evidence="1">
    <location>
        <position position="139"/>
    </location>
    <ligand>
        <name>4-CDP-2-C-methyl-D-erythritol 2-phosphate</name>
        <dbReference type="ChEBI" id="CHEBI:57919"/>
    </ligand>
</feature>
<feature type="binding site" evidence="1">
    <location>
        <position position="142"/>
    </location>
    <ligand>
        <name>4-CDP-2-C-methyl-D-erythritol 2-phosphate</name>
        <dbReference type="ChEBI" id="CHEBI:57919"/>
    </ligand>
</feature>
<feature type="site" description="Transition state stabilizer" evidence="1">
    <location>
        <position position="34"/>
    </location>
</feature>
<feature type="site" description="Transition state stabilizer" evidence="1">
    <location>
        <position position="133"/>
    </location>
</feature>
<sequence length="158" mass="17457">MRVGIGYDVHKLVDGRDLIIGGEKIPFEKGLLGHSDADVLCHAIGDSILGAAALGDIGRHFPDTDNRYKGYSSLKLLEEIKRIINEKGYYITNIDSTIIAQKPKMLAYINNMRKNISKVLDISIEDINIKATTEEELGFTGKQLGIKAQSICLLNKNI</sequence>
<protein>
    <recommendedName>
        <fullName evidence="1">2-C-methyl-D-erythritol 2,4-cyclodiphosphate synthase</fullName>
        <shortName evidence="1">MECDP-synthase</shortName>
        <shortName evidence="1">MECPP-synthase</shortName>
        <shortName evidence="1">MECPS</shortName>
        <ecNumber evidence="1">4.6.1.12</ecNumber>
    </recommendedName>
</protein>
<accession>Q899E9</accession>
<evidence type="ECO:0000255" key="1">
    <source>
        <dbReference type="HAMAP-Rule" id="MF_00107"/>
    </source>
</evidence>
<proteinExistence type="inferred from homology"/>
<comment type="function">
    <text evidence="1">Involved in the biosynthesis of isopentenyl diphosphate (IPP) and dimethylallyl diphosphate (DMAPP), two major building blocks of isoprenoid compounds. Catalyzes the conversion of 4-diphosphocytidyl-2-C-methyl-D-erythritol 2-phosphate (CDP-ME2P) to 2-C-methyl-D-erythritol 2,4-cyclodiphosphate (ME-CPP) with a corresponding release of cytidine 5-monophosphate (CMP).</text>
</comment>
<comment type="catalytic activity">
    <reaction evidence="1">
        <text>4-CDP-2-C-methyl-D-erythritol 2-phosphate = 2-C-methyl-D-erythritol 2,4-cyclic diphosphate + CMP</text>
        <dbReference type="Rhea" id="RHEA:23864"/>
        <dbReference type="ChEBI" id="CHEBI:57919"/>
        <dbReference type="ChEBI" id="CHEBI:58483"/>
        <dbReference type="ChEBI" id="CHEBI:60377"/>
        <dbReference type="EC" id="4.6.1.12"/>
    </reaction>
</comment>
<comment type="cofactor">
    <cofactor evidence="1">
        <name>a divalent metal cation</name>
        <dbReference type="ChEBI" id="CHEBI:60240"/>
    </cofactor>
    <text evidence="1">Binds 1 divalent metal cation per subunit.</text>
</comment>
<comment type="pathway">
    <text evidence="1">Isoprenoid biosynthesis; isopentenyl diphosphate biosynthesis via DXP pathway; isopentenyl diphosphate from 1-deoxy-D-xylulose 5-phosphate: step 4/6.</text>
</comment>
<comment type="subunit">
    <text evidence="1">Homotrimer.</text>
</comment>
<comment type="similarity">
    <text evidence="1">Belongs to the IspF family.</text>
</comment>